<reference key="1">
    <citation type="journal article" date="2003" name="Dev. Cell">
        <title>Mind bomb is a ubiquitin ligase that is essential for efficient activation of Notch signaling by Delta.</title>
        <authorList>
            <person name="Itoh M."/>
            <person name="Kim C.-H."/>
            <person name="Palardy G."/>
            <person name="Oda T."/>
            <person name="Jiang Y.-J."/>
            <person name="Maust D."/>
            <person name="Yeo S.-Y."/>
            <person name="Lorick K."/>
            <person name="Wright G.J."/>
            <person name="Ariza-McNaughton L."/>
            <person name="Weissman A.M."/>
            <person name="Lewis J."/>
            <person name="Chandrasekharappa S.C."/>
            <person name="Chitnis A.B."/>
        </authorList>
    </citation>
    <scope>NUCLEOTIDE SEQUENCE [MRNA]</scope>
</reference>
<reference key="2">
    <citation type="submission" date="2002-09" db="EMBL/GenBank/DDBJ databases">
        <authorList>
            <person name="Yoo K.-W."/>
            <person name="Chitnis A."/>
            <person name="Kim C.-H."/>
        </authorList>
    </citation>
    <scope>NUCLEOTIDE SEQUENCE [MRNA]</scope>
</reference>
<reference key="3">
    <citation type="submission" date="2007-02" db="EMBL/GenBank/DDBJ databases">
        <authorList>
            <consortium name="NHLBI resequencing and genotyping service (RS&amp;G)"/>
        </authorList>
    </citation>
    <scope>NUCLEOTIDE SEQUENCE [GENOMIC DNA]</scope>
</reference>
<reference key="4">
    <citation type="journal article" date="2004" name="Genome Res.">
        <title>The status, quality, and expansion of the NIH full-length cDNA project: the Mammalian Gene Collection (MGC).</title>
        <authorList>
            <consortium name="The MGC Project Team"/>
        </authorList>
    </citation>
    <scope>NUCLEOTIDE SEQUENCE [LARGE SCALE MRNA]</scope>
    <source>
        <tissue>Lung</tissue>
    </source>
</reference>
<reference key="5">
    <citation type="journal article" date="2007" name="BMC Genomics">
        <title>The full-ORF clone resource of the German cDNA consortium.</title>
        <authorList>
            <person name="Bechtel S."/>
            <person name="Rosenfelder H."/>
            <person name="Duda A."/>
            <person name="Schmidt C.P."/>
            <person name="Ernst U."/>
            <person name="Wellenreuther R."/>
            <person name="Mehrle A."/>
            <person name="Schuster C."/>
            <person name="Bahr A."/>
            <person name="Bloecker H."/>
            <person name="Heubner D."/>
            <person name="Hoerlein A."/>
            <person name="Michel G."/>
            <person name="Wedler H."/>
            <person name="Koehrer K."/>
            <person name="Ottenwaelder B."/>
            <person name="Poustka A."/>
            <person name="Wiemann S."/>
            <person name="Schupp I."/>
        </authorList>
    </citation>
    <scope>NUCLEOTIDE SEQUENCE [LARGE SCALE MRNA] OF 195-1006</scope>
    <source>
        <tissue>Amygdala</tissue>
        <tissue>Endometrial tumor</tissue>
    </source>
</reference>
<reference key="6">
    <citation type="journal article" date="2000" name="DNA Res.">
        <title>Prediction of the coding sequences of unidentified human genes. XVI. The complete sequences of 150 new cDNA clones from brain which code for large proteins in vitro.</title>
        <authorList>
            <person name="Nagase T."/>
            <person name="Kikuno R."/>
            <person name="Ishikawa K."/>
            <person name="Hirosawa M."/>
            <person name="Ohara O."/>
        </authorList>
    </citation>
    <scope>NUCLEOTIDE SEQUENCE [LARGE SCALE MRNA] OF 611-1006</scope>
    <scope>TISSUE SPECIFICITY</scope>
    <source>
        <tissue>Brain</tissue>
    </source>
</reference>
<reference key="7">
    <citation type="journal article" date="2004" name="Nat. Genet.">
        <title>Complete sequencing and characterization of 21,243 full-length human cDNAs.</title>
        <authorList>
            <person name="Ota T."/>
            <person name="Suzuki Y."/>
            <person name="Nishikawa T."/>
            <person name="Otsuki T."/>
            <person name="Sugiyama T."/>
            <person name="Irie R."/>
            <person name="Wakamatsu A."/>
            <person name="Hayashi K."/>
            <person name="Sato H."/>
            <person name="Nagai K."/>
            <person name="Kimura K."/>
            <person name="Makita H."/>
            <person name="Sekine M."/>
            <person name="Obayashi M."/>
            <person name="Nishi T."/>
            <person name="Shibahara T."/>
            <person name="Tanaka T."/>
            <person name="Ishii S."/>
            <person name="Yamamoto J."/>
            <person name="Saito K."/>
            <person name="Kawai Y."/>
            <person name="Isono Y."/>
            <person name="Nakamura Y."/>
            <person name="Nagahari K."/>
            <person name="Murakami K."/>
            <person name="Yasuda T."/>
            <person name="Iwayanagi T."/>
            <person name="Wagatsuma M."/>
            <person name="Shiratori A."/>
            <person name="Sudo H."/>
            <person name="Hosoiri T."/>
            <person name="Kaku Y."/>
            <person name="Kodaira H."/>
            <person name="Kondo H."/>
            <person name="Sugawara M."/>
            <person name="Takahashi M."/>
            <person name="Kanda K."/>
            <person name="Yokoi T."/>
            <person name="Furuya T."/>
            <person name="Kikkawa E."/>
            <person name="Omura Y."/>
            <person name="Abe K."/>
            <person name="Kamihara K."/>
            <person name="Katsuta N."/>
            <person name="Sato K."/>
            <person name="Tanikawa M."/>
            <person name="Yamazaki M."/>
            <person name="Ninomiya K."/>
            <person name="Ishibashi T."/>
            <person name="Yamashita H."/>
            <person name="Murakawa K."/>
            <person name="Fujimori K."/>
            <person name="Tanai H."/>
            <person name="Kimata M."/>
            <person name="Watanabe M."/>
            <person name="Hiraoka S."/>
            <person name="Chiba Y."/>
            <person name="Ishida S."/>
            <person name="Ono Y."/>
            <person name="Takiguchi S."/>
            <person name="Watanabe S."/>
            <person name="Yosida M."/>
            <person name="Hotuta T."/>
            <person name="Kusano J."/>
            <person name="Kanehori K."/>
            <person name="Takahashi-Fujii A."/>
            <person name="Hara H."/>
            <person name="Tanase T.-O."/>
            <person name="Nomura Y."/>
            <person name="Togiya S."/>
            <person name="Komai F."/>
            <person name="Hara R."/>
            <person name="Takeuchi K."/>
            <person name="Arita M."/>
            <person name="Imose N."/>
            <person name="Musashino K."/>
            <person name="Yuuki H."/>
            <person name="Oshima A."/>
            <person name="Sasaki N."/>
            <person name="Aotsuka S."/>
            <person name="Yoshikawa Y."/>
            <person name="Matsunawa H."/>
            <person name="Ichihara T."/>
            <person name="Shiohata N."/>
            <person name="Sano S."/>
            <person name="Moriya S."/>
            <person name="Momiyama H."/>
            <person name="Satoh N."/>
            <person name="Takami S."/>
            <person name="Terashima Y."/>
            <person name="Suzuki O."/>
            <person name="Nakagawa S."/>
            <person name="Senoh A."/>
            <person name="Mizoguchi H."/>
            <person name="Goto Y."/>
            <person name="Shimizu F."/>
            <person name="Wakebe H."/>
            <person name="Hishigaki H."/>
            <person name="Watanabe T."/>
            <person name="Sugiyama A."/>
            <person name="Takemoto M."/>
            <person name="Kawakami B."/>
            <person name="Yamazaki M."/>
            <person name="Watanabe K."/>
            <person name="Kumagai A."/>
            <person name="Itakura S."/>
            <person name="Fukuzumi Y."/>
            <person name="Fujimori Y."/>
            <person name="Komiyama M."/>
            <person name="Tashiro H."/>
            <person name="Tanigami A."/>
            <person name="Fujiwara T."/>
            <person name="Ono T."/>
            <person name="Yamada K."/>
            <person name="Fujii Y."/>
            <person name="Ozaki K."/>
            <person name="Hirao M."/>
            <person name="Ohmori Y."/>
            <person name="Kawabata A."/>
            <person name="Hikiji T."/>
            <person name="Kobatake N."/>
            <person name="Inagaki H."/>
            <person name="Ikema Y."/>
            <person name="Okamoto S."/>
            <person name="Okitani R."/>
            <person name="Kawakami T."/>
            <person name="Noguchi S."/>
            <person name="Itoh T."/>
            <person name="Shigeta K."/>
            <person name="Senba T."/>
            <person name="Matsumura K."/>
            <person name="Nakajima Y."/>
            <person name="Mizuno T."/>
            <person name="Morinaga M."/>
            <person name="Sasaki M."/>
            <person name="Togashi T."/>
            <person name="Oyama M."/>
            <person name="Hata H."/>
            <person name="Watanabe M."/>
            <person name="Komatsu T."/>
            <person name="Mizushima-Sugano J."/>
            <person name="Satoh T."/>
            <person name="Shirai Y."/>
            <person name="Takahashi Y."/>
            <person name="Nakagawa K."/>
            <person name="Okumura K."/>
            <person name="Nagase T."/>
            <person name="Nomura N."/>
            <person name="Kikuchi H."/>
            <person name="Masuho Y."/>
            <person name="Yamashita R."/>
            <person name="Nakai K."/>
            <person name="Yada T."/>
            <person name="Nakamura Y."/>
            <person name="Ohara O."/>
            <person name="Isogai T."/>
            <person name="Sugano S."/>
        </authorList>
    </citation>
    <scope>NUCLEOTIDE SEQUENCE [LARGE SCALE MRNA] OF 627-1006</scope>
    <source>
        <tissue>Placenta</tissue>
    </source>
</reference>
<reference key="8">
    <citation type="journal article" date="2004" name="Ann. Neurol.">
        <title>Death-associated protein kinase expression in human temporal lobe epilepsy.</title>
        <authorList>
            <person name="Henshall D.C."/>
            <person name="Schindler C.K."/>
            <person name="So N.K."/>
            <person name="Lan J.-Q."/>
            <person name="Meller R."/>
            <person name="Simon R.P."/>
        </authorList>
    </citation>
    <scope>POSSIBLE SUBCELLULAR LOCATION</scope>
</reference>
<reference key="9">
    <citation type="journal article" date="2011" name="Immunity">
        <title>Mapping a dynamic innate immunity protein interaction network regulating type I interferon production.</title>
        <authorList>
            <person name="Li S."/>
            <person name="Wang L."/>
            <person name="Berman M."/>
            <person name="Kong Y.Y."/>
            <person name="Dorf M.E."/>
        </authorList>
    </citation>
    <scope>UBIQUITINATION OF TBK1</scope>
</reference>
<reference key="10">
    <citation type="journal article" date="2013" name="EMBO J.">
        <title>A new cellular stress response that triggers centriolar satellite reorganization and ciliogenesis.</title>
        <authorList>
            <person name="Villumsen B.H."/>
            <person name="Danielsen J.R."/>
            <person name="Povlsen L."/>
            <person name="Sylvestersen K.B."/>
            <person name="Merdes A."/>
            <person name="Beli P."/>
            <person name="Yang Y.G."/>
            <person name="Choudhary C."/>
            <person name="Nielsen M.L."/>
            <person name="Mailand N."/>
            <person name="Bekker-Jensen S."/>
        </authorList>
    </citation>
    <scope>FUNCTION IN UBIQUITINATION OF CEP131 AND PCM1</scope>
    <scope>FUNCTION IN CILIOGENESIS</scope>
    <scope>UBIQUITINATION</scope>
    <scope>INTERACTION WITH CEP131 AND PCM1</scope>
    <scope>SUBCELLULAR LOCATION</scope>
</reference>
<reference key="11">
    <citation type="journal article" date="2014" name="J. Proteomics">
        <title>An enzyme assisted RP-RPLC approach for in-depth analysis of human liver phosphoproteome.</title>
        <authorList>
            <person name="Bian Y."/>
            <person name="Song C."/>
            <person name="Cheng K."/>
            <person name="Dong M."/>
            <person name="Wang F."/>
            <person name="Huang J."/>
            <person name="Sun D."/>
            <person name="Wang L."/>
            <person name="Ye M."/>
            <person name="Zou H."/>
        </authorList>
    </citation>
    <scope>PHOSPHORYLATION [LARGE SCALE ANALYSIS] AT SER-408</scope>
    <scope>IDENTIFICATION BY MASS SPECTROMETRY [LARGE SCALE ANALYSIS]</scope>
    <source>
        <tissue>Liver</tissue>
    </source>
</reference>
<reference key="12">
    <citation type="journal article" date="2012" name="N. Engl. J. Med.">
        <title>Diagnostic exome sequencing in persons with severe intellectual disability.</title>
        <authorList>
            <person name="de Ligt J."/>
            <person name="Willemsen M.H."/>
            <person name="van Bon B.W."/>
            <person name="Kleefstra T."/>
            <person name="Yntema H.G."/>
            <person name="Kroes T."/>
            <person name="Vulto-van Silfhout A.T."/>
            <person name="Koolen D.A."/>
            <person name="de Vries P."/>
            <person name="Gilissen C."/>
            <person name="del Rosario M."/>
            <person name="Hoischen A."/>
            <person name="Scheffer H."/>
            <person name="de Vries B.B."/>
            <person name="Brunner H.G."/>
            <person name="Veltman J.A."/>
            <person name="Vissers L.E."/>
        </authorList>
    </citation>
    <scope>VARIANT HIS-174</scope>
</reference>
<reference key="13">
    <citation type="journal article" date="2013" name="Nat. Med.">
        <title>Mutations in the NOTCH pathway regulator MIB1 cause left ventricular noncompaction cardiomyopathy.</title>
        <authorList>
            <person name="Luxan G."/>
            <person name="Casanova J.C."/>
            <person name="Martinez-Poveda B."/>
            <person name="Prados B."/>
            <person name="D'Amato G."/>
            <person name="MacGrogan D."/>
            <person name="Gonzalez-Rajal A."/>
            <person name="Dobarro D."/>
            <person name="Torroja C."/>
            <person name="Martinez F."/>
            <person name="Izquierdo-Garcia J.L."/>
            <person name="Fernandez-Friera L."/>
            <person name="Sabater-Molina M."/>
            <person name="Kong Y.Y."/>
            <person name="Pizarro G."/>
            <person name="Ibanez B."/>
            <person name="Medrano C."/>
            <person name="Garcia-Pavia P."/>
            <person name="Gimeno J.R."/>
            <person name="Monserrat L."/>
            <person name="Jimenez-Borreguero L.J."/>
            <person name="de la Pompa J.L."/>
        </authorList>
    </citation>
    <scope>VARIANT LVNC7 PHE-943</scope>
</reference>
<reference key="14">
    <citation type="journal article" date="2019" name="Cell Rep.">
        <title>The E3 Ubiquitin Ligase Mind Bomb 1 Controls Adenovirus Genome Release at the Nuclear Pore Complex.</title>
        <authorList>
            <person name="Bauer M."/>
            <person name="Flatt J.W."/>
            <person name="Seiler D."/>
            <person name="Cardel B."/>
            <person name="Emmenlauer M."/>
            <person name="Boucke K."/>
            <person name="Suomalainen M."/>
            <person name="Hemmi S."/>
            <person name="Greber U.F."/>
        </authorList>
    </citation>
    <scope>FUNCTION (MICROBIAL INFECTION)</scope>
</reference>
<dbReference type="EC" id="2.3.2.27"/>
<dbReference type="EMBL" id="AY149908">
    <property type="protein sequence ID" value="AAN75493.1"/>
    <property type="molecule type" value="mRNA"/>
</dbReference>
<dbReference type="EMBL" id="AY147849">
    <property type="protein sequence ID" value="AAN18023.1"/>
    <property type="status" value="ALT_FRAME"/>
    <property type="molecule type" value="mRNA"/>
</dbReference>
<dbReference type="EMBL" id="EF444995">
    <property type="protein sequence ID" value="ACA06016.1"/>
    <property type="molecule type" value="Genomic_DNA"/>
</dbReference>
<dbReference type="EMBL" id="BC022403">
    <property type="protein sequence ID" value="AAH22403.1"/>
    <property type="status" value="ALT_INIT"/>
    <property type="molecule type" value="mRNA"/>
</dbReference>
<dbReference type="EMBL" id="BC110581">
    <property type="protein sequence ID" value="AAI10582.1"/>
    <property type="molecule type" value="mRNA"/>
</dbReference>
<dbReference type="EMBL" id="BC110582">
    <property type="protein sequence ID" value="AAI10583.1"/>
    <property type="molecule type" value="mRNA"/>
</dbReference>
<dbReference type="EMBL" id="CR749635">
    <property type="protein sequence ID" value="CAH18429.1"/>
    <property type="molecule type" value="mRNA"/>
</dbReference>
<dbReference type="EMBL" id="AL713705">
    <property type="protein sequence ID" value="CAD28502.1"/>
    <property type="molecule type" value="mRNA"/>
</dbReference>
<dbReference type="EMBL" id="AB037744">
    <property type="protein sequence ID" value="BAA92561.1"/>
    <property type="molecule type" value="mRNA"/>
</dbReference>
<dbReference type="EMBL" id="AK075157">
    <property type="protein sequence ID" value="BAC11439.1"/>
    <property type="status" value="ALT_INIT"/>
    <property type="molecule type" value="mRNA"/>
</dbReference>
<dbReference type="CCDS" id="CCDS11871.1"/>
<dbReference type="RefSeq" id="NP_065825.1">
    <property type="nucleotide sequence ID" value="NM_020774.4"/>
</dbReference>
<dbReference type="PDB" id="4TSE">
    <property type="method" value="X-ray"/>
    <property type="resolution" value="2.06 A"/>
    <property type="chains" value="A/B=239-409"/>
</dbReference>
<dbReference type="PDB" id="4XI6">
    <property type="method" value="X-ray"/>
    <property type="resolution" value="2.04 A"/>
    <property type="chains" value="A=8-402"/>
</dbReference>
<dbReference type="PDB" id="4XI7">
    <property type="method" value="X-ray"/>
    <property type="resolution" value="2.05 A"/>
    <property type="chains" value="A=8-402"/>
</dbReference>
<dbReference type="PDB" id="4XIB">
    <property type="method" value="X-ray"/>
    <property type="resolution" value="2.15 A"/>
    <property type="chains" value="A=8-402"/>
</dbReference>
<dbReference type="PDB" id="8V0D">
    <property type="method" value="X-ray"/>
    <property type="resolution" value="2.40 A"/>
    <property type="chains" value="A/B=936-1006"/>
</dbReference>
<dbReference type="PDB" id="8V0E">
    <property type="method" value="X-ray"/>
    <property type="resolution" value="2.39 A"/>
    <property type="chains" value="A/B=409-794"/>
</dbReference>
<dbReference type="PDBsum" id="4TSE"/>
<dbReference type="PDBsum" id="4XI6"/>
<dbReference type="PDBsum" id="4XI7"/>
<dbReference type="PDBsum" id="4XIB"/>
<dbReference type="PDBsum" id="8V0D"/>
<dbReference type="PDBsum" id="8V0E"/>
<dbReference type="SMR" id="Q86YT6"/>
<dbReference type="BioGRID" id="121593">
    <property type="interactions" value="352"/>
</dbReference>
<dbReference type="FunCoup" id="Q86YT6">
    <property type="interactions" value="3545"/>
</dbReference>
<dbReference type="IntAct" id="Q86YT6">
    <property type="interactions" value="87"/>
</dbReference>
<dbReference type="MINT" id="Q86YT6"/>
<dbReference type="STRING" id="9606.ENSP00000261537"/>
<dbReference type="iPTMnet" id="Q86YT6"/>
<dbReference type="PhosphoSitePlus" id="Q86YT6"/>
<dbReference type="BioMuta" id="MIB1"/>
<dbReference type="DMDM" id="68565512"/>
<dbReference type="jPOST" id="Q86YT6"/>
<dbReference type="MassIVE" id="Q86YT6"/>
<dbReference type="PaxDb" id="9606-ENSP00000261537"/>
<dbReference type="PeptideAtlas" id="Q86YT6"/>
<dbReference type="ProteomicsDB" id="70468"/>
<dbReference type="Pumba" id="Q86YT6"/>
<dbReference type="Antibodypedia" id="7263">
    <property type="antibodies" value="343 antibodies from 38 providers"/>
</dbReference>
<dbReference type="DNASU" id="57534"/>
<dbReference type="Ensembl" id="ENST00000261537.7">
    <property type="protein sequence ID" value="ENSP00000261537.6"/>
    <property type="gene ID" value="ENSG00000101752.13"/>
</dbReference>
<dbReference type="GeneID" id="57534"/>
<dbReference type="KEGG" id="hsa:57534"/>
<dbReference type="MANE-Select" id="ENST00000261537.7">
    <property type="protein sequence ID" value="ENSP00000261537.6"/>
    <property type="RefSeq nucleotide sequence ID" value="NM_020774.4"/>
    <property type="RefSeq protein sequence ID" value="NP_065825.1"/>
</dbReference>
<dbReference type="UCSC" id="uc002ktq.5">
    <property type="organism name" value="human"/>
</dbReference>
<dbReference type="AGR" id="HGNC:21086"/>
<dbReference type="CTD" id="57534"/>
<dbReference type="DisGeNET" id="57534"/>
<dbReference type="GeneCards" id="MIB1"/>
<dbReference type="HGNC" id="HGNC:21086">
    <property type="gene designation" value="MIB1"/>
</dbReference>
<dbReference type="HPA" id="ENSG00000101752">
    <property type="expression patterns" value="Low tissue specificity"/>
</dbReference>
<dbReference type="MalaCards" id="MIB1"/>
<dbReference type="MIM" id="608677">
    <property type="type" value="gene"/>
</dbReference>
<dbReference type="MIM" id="615092">
    <property type="type" value="phenotype"/>
</dbReference>
<dbReference type="neXtProt" id="NX_Q86YT6"/>
<dbReference type="OpenTargets" id="ENSG00000101752"/>
<dbReference type="Orphanet" id="54260">
    <property type="disease" value="Left ventricular noncompaction"/>
</dbReference>
<dbReference type="PharmGKB" id="PA134862722"/>
<dbReference type="VEuPathDB" id="HostDB:ENSG00000101752"/>
<dbReference type="eggNOG" id="KOG0504">
    <property type="taxonomic scope" value="Eukaryota"/>
</dbReference>
<dbReference type="eggNOG" id="KOG4582">
    <property type="taxonomic scope" value="Eukaryota"/>
</dbReference>
<dbReference type="GeneTree" id="ENSGT00940000156781"/>
<dbReference type="HOGENOM" id="CLU_007287_1_0_1"/>
<dbReference type="InParanoid" id="Q86YT6"/>
<dbReference type="OMA" id="FFKPCGH"/>
<dbReference type="OrthoDB" id="2122982at2759"/>
<dbReference type="PAN-GO" id="Q86YT6">
    <property type="GO annotations" value="5 GO annotations based on evolutionary models"/>
</dbReference>
<dbReference type="PhylomeDB" id="Q86YT6"/>
<dbReference type="TreeFam" id="TF324147"/>
<dbReference type="PathwayCommons" id="Q86YT6"/>
<dbReference type="Reactome" id="R-HSA-2122948">
    <property type="pathway name" value="Activated NOTCH1 Transmits Signal to the Nucleus"/>
</dbReference>
<dbReference type="Reactome" id="R-HSA-2644606">
    <property type="pathway name" value="Constitutive Signaling by NOTCH1 PEST Domain Mutants"/>
</dbReference>
<dbReference type="Reactome" id="R-HSA-2691232">
    <property type="pathway name" value="Constitutive Signaling by NOTCH1 HD Domain Mutants"/>
</dbReference>
<dbReference type="Reactome" id="R-HSA-2894862">
    <property type="pathway name" value="Constitutive Signaling by NOTCH1 HD+PEST Domain Mutants"/>
</dbReference>
<dbReference type="Reactome" id="R-HSA-2979096">
    <property type="pathway name" value="NOTCH2 Activation and Transmission of Signal to the Nucleus"/>
</dbReference>
<dbReference type="Reactome" id="R-HSA-9013507">
    <property type="pathway name" value="NOTCH3 Activation and Transmission of Signal to the Nucleus"/>
</dbReference>
<dbReference type="SignaLink" id="Q86YT6"/>
<dbReference type="SIGNOR" id="Q86YT6"/>
<dbReference type="UniPathway" id="UPA00143"/>
<dbReference type="BioGRID-ORCS" id="57534">
    <property type="hits" value="117 hits in 1211 CRISPR screens"/>
</dbReference>
<dbReference type="CD-CODE" id="8C2F96ED">
    <property type="entry name" value="Centrosome"/>
</dbReference>
<dbReference type="ChiTaRS" id="MIB1">
    <property type="organism name" value="human"/>
</dbReference>
<dbReference type="EvolutionaryTrace" id="Q86YT6"/>
<dbReference type="GeneWiki" id="MIB1_(gene)"/>
<dbReference type="GenomeRNAi" id="57534"/>
<dbReference type="Pharos" id="Q86YT6">
    <property type="development level" value="Tbio"/>
</dbReference>
<dbReference type="PRO" id="PR:Q86YT6"/>
<dbReference type="Proteomes" id="UP000005640">
    <property type="component" value="Chromosome 18"/>
</dbReference>
<dbReference type="RNAct" id="Q86YT6">
    <property type="molecule type" value="protein"/>
</dbReference>
<dbReference type="Bgee" id="ENSG00000101752">
    <property type="expression patterns" value="Expressed in corpus epididymis and 195 other cell types or tissues"/>
</dbReference>
<dbReference type="GO" id="GO:0034451">
    <property type="term" value="C:centriolar satellite"/>
    <property type="evidence" value="ECO:0007669"/>
    <property type="project" value="UniProtKB-SubCell"/>
</dbReference>
<dbReference type="GO" id="GO:0005813">
    <property type="term" value="C:centrosome"/>
    <property type="evidence" value="ECO:0000314"/>
    <property type="project" value="UniProtKB"/>
</dbReference>
<dbReference type="GO" id="GO:0005737">
    <property type="term" value="C:cytoplasm"/>
    <property type="evidence" value="ECO:0000318"/>
    <property type="project" value="GO_Central"/>
</dbReference>
<dbReference type="GO" id="GO:0031410">
    <property type="term" value="C:cytoplasmic vesicle"/>
    <property type="evidence" value="ECO:0007669"/>
    <property type="project" value="Ensembl"/>
</dbReference>
<dbReference type="GO" id="GO:0005829">
    <property type="term" value="C:cytosol"/>
    <property type="evidence" value="ECO:0000304"/>
    <property type="project" value="Reactome"/>
</dbReference>
<dbReference type="GO" id="GO:0098978">
    <property type="term" value="C:glutamatergic synapse"/>
    <property type="evidence" value="ECO:0007669"/>
    <property type="project" value="Ensembl"/>
</dbReference>
<dbReference type="GO" id="GO:0005886">
    <property type="term" value="C:plasma membrane"/>
    <property type="evidence" value="ECO:0007669"/>
    <property type="project" value="UniProtKB-SubCell"/>
</dbReference>
<dbReference type="GO" id="GO:0014069">
    <property type="term" value="C:postsynaptic density"/>
    <property type="evidence" value="ECO:0007669"/>
    <property type="project" value="Ensembl"/>
</dbReference>
<dbReference type="GO" id="GO:0061630">
    <property type="term" value="F:ubiquitin protein ligase activity"/>
    <property type="evidence" value="ECO:0000318"/>
    <property type="project" value="GO_Central"/>
</dbReference>
<dbReference type="GO" id="GO:0004842">
    <property type="term" value="F:ubiquitin-protein transferase activity"/>
    <property type="evidence" value="ECO:0000304"/>
    <property type="project" value="Reactome"/>
</dbReference>
<dbReference type="GO" id="GO:0008270">
    <property type="term" value="F:zinc ion binding"/>
    <property type="evidence" value="ECO:0007669"/>
    <property type="project" value="UniProtKB-KW"/>
</dbReference>
<dbReference type="GO" id="GO:0001568">
    <property type="term" value="P:blood vessel development"/>
    <property type="evidence" value="ECO:0007669"/>
    <property type="project" value="Ensembl"/>
</dbReference>
<dbReference type="GO" id="GO:0021953">
    <property type="term" value="P:central nervous system neuron differentiation"/>
    <property type="evidence" value="ECO:0007669"/>
    <property type="project" value="Ensembl"/>
</dbReference>
<dbReference type="GO" id="GO:0006897">
    <property type="term" value="P:endocytosis"/>
    <property type="evidence" value="ECO:0000318"/>
    <property type="project" value="GO_Central"/>
</dbReference>
<dbReference type="GO" id="GO:0001947">
    <property type="term" value="P:heart looping"/>
    <property type="evidence" value="ECO:0007669"/>
    <property type="project" value="Ensembl"/>
</dbReference>
<dbReference type="GO" id="GO:0001701">
    <property type="term" value="P:in utero embryonic development"/>
    <property type="evidence" value="ECO:0007669"/>
    <property type="project" value="Ensembl"/>
</dbReference>
<dbReference type="GO" id="GO:0045665">
    <property type="term" value="P:negative regulation of neuron differentiation"/>
    <property type="evidence" value="ECO:0007669"/>
    <property type="project" value="Ensembl"/>
</dbReference>
<dbReference type="GO" id="GO:0001841">
    <property type="term" value="P:neural tube formation"/>
    <property type="evidence" value="ECO:0007669"/>
    <property type="project" value="Ensembl"/>
</dbReference>
<dbReference type="GO" id="GO:0007219">
    <property type="term" value="P:Notch signaling pathway"/>
    <property type="evidence" value="ECO:0000318"/>
    <property type="project" value="GO_Central"/>
</dbReference>
<dbReference type="GO" id="GO:0045807">
    <property type="term" value="P:positive regulation of endocytosis"/>
    <property type="evidence" value="ECO:0007669"/>
    <property type="project" value="Ensembl"/>
</dbReference>
<dbReference type="GO" id="GO:0016567">
    <property type="term" value="P:protein ubiquitination"/>
    <property type="evidence" value="ECO:0000318"/>
    <property type="project" value="GO_Central"/>
</dbReference>
<dbReference type="GO" id="GO:0001756">
    <property type="term" value="P:somitogenesis"/>
    <property type="evidence" value="ECO:0007669"/>
    <property type="project" value="Ensembl"/>
</dbReference>
<dbReference type="GO" id="GO:0006511">
    <property type="term" value="P:ubiquitin-dependent protein catabolic process"/>
    <property type="evidence" value="ECO:0000314"/>
    <property type="project" value="CACAO"/>
</dbReference>
<dbReference type="CDD" id="cd16724">
    <property type="entry name" value="RING-HC_MIB1_rpt1"/>
    <property type="match status" value="1"/>
</dbReference>
<dbReference type="CDD" id="cd16725">
    <property type="entry name" value="RING-HC_MIB1_rpt2"/>
    <property type="match status" value="1"/>
</dbReference>
<dbReference type="CDD" id="cd16727">
    <property type="entry name" value="RING-HC_MIB1_rpt3"/>
    <property type="match status" value="1"/>
</dbReference>
<dbReference type="CDD" id="cd02339">
    <property type="entry name" value="ZZ_Mind_bomb"/>
    <property type="match status" value="1"/>
</dbReference>
<dbReference type="FunFam" id="1.25.40.20:FF:000059">
    <property type="entry name" value="E3 ubiquitin-protein ligase MIB1 isoform X1"/>
    <property type="match status" value="1"/>
</dbReference>
<dbReference type="FunFam" id="1.25.40.20:FF:000191">
    <property type="entry name" value="E3 ubiquitin-protein ligase MIB1 isoform X1"/>
    <property type="match status" value="1"/>
</dbReference>
<dbReference type="FunFam" id="2.30.30.40:FF:000090">
    <property type="entry name" value="E3 ubiquitin-protein ligase MIB1 isoform X1"/>
    <property type="match status" value="1"/>
</dbReference>
<dbReference type="FunFam" id="3.30.40.10:FF:000083">
    <property type="entry name" value="E3 ubiquitin-protein ligase MIB1 isoform X1"/>
    <property type="match status" value="1"/>
</dbReference>
<dbReference type="FunFam" id="3.30.40.10:FF:000085">
    <property type="entry name" value="E3 ubiquitin-protein ligase MIB1 isoform X1"/>
    <property type="match status" value="1"/>
</dbReference>
<dbReference type="FunFam" id="3.30.40.10:FF:000135">
    <property type="entry name" value="E3 ubiquitin-protein ligase mib1 isoform X1"/>
    <property type="match status" value="1"/>
</dbReference>
<dbReference type="FunFam" id="3.30.60.90:FF:000005">
    <property type="entry name" value="Putative E3 ubiquitin-protein ligase mib1"/>
    <property type="match status" value="1"/>
</dbReference>
<dbReference type="FunFam" id="2.30.30.40:FF:000054">
    <property type="entry name" value="Putative e3 ubiquitin-protein ligase mind-bomb"/>
    <property type="match status" value="1"/>
</dbReference>
<dbReference type="Gene3D" id="3.30.60.90">
    <property type="match status" value="1"/>
</dbReference>
<dbReference type="Gene3D" id="1.25.40.20">
    <property type="entry name" value="Ankyrin repeat-containing domain"/>
    <property type="match status" value="4"/>
</dbReference>
<dbReference type="Gene3D" id="2.30.30.40">
    <property type="entry name" value="SH3 Domains"/>
    <property type="match status" value="2"/>
</dbReference>
<dbReference type="Gene3D" id="3.30.40.10">
    <property type="entry name" value="Zinc/RING finger domain, C3HC4 (zinc finger)"/>
    <property type="match status" value="3"/>
</dbReference>
<dbReference type="InterPro" id="IPR002110">
    <property type="entry name" value="Ankyrin_rpt"/>
</dbReference>
<dbReference type="InterPro" id="IPR036770">
    <property type="entry name" value="Ankyrin_rpt-contain_sf"/>
</dbReference>
<dbReference type="InterPro" id="IPR042056">
    <property type="entry name" value="MIB1/2_ZZ"/>
</dbReference>
<dbReference type="InterPro" id="IPR010606">
    <property type="entry name" value="Mib_Herc2"/>
</dbReference>
<dbReference type="InterPro" id="IPR037252">
    <property type="entry name" value="Mib_Herc2_sf"/>
</dbReference>
<dbReference type="InterPro" id="IPR040847">
    <property type="entry name" value="SH3_15"/>
</dbReference>
<dbReference type="InterPro" id="IPR001841">
    <property type="entry name" value="Znf_RING"/>
</dbReference>
<dbReference type="InterPro" id="IPR013083">
    <property type="entry name" value="Znf_RING/FYVE/PHD"/>
</dbReference>
<dbReference type="InterPro" id="IPR000433">
    <property type="entry name" value="Znf_ZZ"/>
</dbReference>
<dbReference type="InterPro" id="IPR043145">
    <property type="entry name" value="Znf_ZZ_sf"/>
</dbReference>
<dbReference type="PANTHER" id="PTHR24202:SF53">
    <property type="entry name" value="E3 UBIQUITIN-PROTEIN LIGASE MIB1"/>
    <property type="match status" value="1"/>
</dbReference>
<dbReference type="PANTHER" id="PTHR24202">
    <property type="entry name" value="E3 UBIQUITIN-PROTEIN LIGASE MIB2"/>
    <property type="match status" value="1"/>
</dbReference>
<dbReference type="Pfam" id="PF00023">
    <property type="entry name" value="Ank"/>
    <property type="match status" value="1"/>
</dbReference>
<dbReference type="Pfam" id="PF12796">
    <property type="entry name" value="Ank_2"/>
    <property type="match status" value="2"/>
</dbReference>
<dbReference type="Pfam" id="PF06701">
    <property type="entry name" value="MIB_HERC2"/>
    <property type="match status" value="2"/>
</dbReference>
<dbReference type="Pfam" id="PF18346">
    <property type="entry name" value="SH3_15"/>
    <property type="match status" value="2"/>
</dbReference>
<dbReference type="Pfam" id="PF13920">
    <property type="entry name" value="zf-C3HC4_3"/>
    <property type="match status" value="3"/>
</dbReference>
<dbReference type="Pfam" id="PF00569">
    <property type="entry name" value="ZZ"/>
    <property type="match status" value="1"/>
</dbReference>
<dbReference type="PRINTS" id="PR01415">
    <property type="entry name" value="ANKYRIN"/>
</dbReference>
<dbReference type="SMART" id="SM00248">
    <property type="entry name" value="ANK"/>
    <property type="match status" value="9"/>
</dbReference>
<dbReference type="SMART" id="SM00184">
    <property type="entry name" value="RING"/>
    <property type="match status" value="3"/>
</dbReference>
<dbReference type="SMART" id="SM00291">
    <property type="entry name" value="ZnF_ZZ"/>
    <property type="match status" value="1"/>
</dbReference>
<dbReference type="SUPFAM" id="SSF48403">
    <property type="entry name" value="Ankyrin repeat"/>
    <property type="match status" value="1"/>
</dbReference>
<dbReference type="SUPFAM" id="SSF159034">
    <property type="entry name" value="Mib/herc2 domain-like"/>
    <property type="match status" value="2"/>
</dbReference>
<dbReference type="SUPFAM" id="SSF57850">
    <property type="entry name" value="RING/U-box"/>
    <property type="match status" value="2"/>
</dbReference>
<dbReference type="PROSITE" id="PS50297">
    <property type="entry name" value="ANK_REP_REGION"/>
    <property type="match status" value="1"/>
</dbReference>
<dbReference type="PROSITE" id="PS50088">
    <property type="entry name" value="ANK_REPEAT"/>
    <property type="match status" value="6"/>
</dbReference>
<dbReference type="PROSITE" id="PS51416">
    <property type="entry name" value="MIB_HERC2"/>
    <property type="match status" value="2"/>
</dbReference>
<dbReference type="PROSITE" id="PS50089">
    <property type="entry name" value="ZF_RING_2"/>
    <property type="match status" value="3"/>
</dbReference>
<dbReference type="PROSITE" id="PS01357">
    <property type="entry name" value="ZF_ZZ_1"/>
    <property type="match status" value="1"/>
</dbReference>
<dbReference type="PROSITE" id="PS50135">
    <property type="entry name" value="ZF_ZZ_2"/>
    <property type="match status" value="1"/>
</dbReference>
<proteinExistence type="evidence at protein level"/>
<keyword id="KW-0002">3D-structure</keyword>
<keyword id="KW-0040">ANK repeat</keyword>
<keyword id="KW-0122">Cardiomyopathy</keyword>
<keyword id="KW-1003">Cell membrane</keyword>
<keyword id="KW-0175">Coiled coil</keyword>
<keyword id="KW-0963">Cytoplasm</keyword>
<keyword id="KW-0206">Cytoskeleton</keyword>
<keyword id="KW-0225">Disease variant</keyword>
<keyword id="KW-0472">Membrane</keyword>
<keyword id="KW-0479">Metal-binding</keyword>
<keyword id="KW-0914">Notch signaling pathway</keyword>
<keyword id="KW-0597">Phosphoprotein</keyword>
<keyword id="KW-1267">Proteomics identification</keyword>
<keyword id="KW-1185">Reference proteome</keyword>
<keyword id="KW-0677">Repeat</keyword>
<keyword id="KW-0808">Transferase</keyword>
<keyword id="KW-0832">Ubl conjugation</keyword>
<keyword id="KW-0833">Ubl conjugation pathway</keyword>
<keyword id="KW-0862">Zinc</keyword>
<keyword id="KW-0863">Zinc-finger</keyword>
<evidence type="ECO:0000250" key="1"/>
<evidence type="ECO:0000255" key="2"/>
<evidence type="ECO:0000255" key="3">
    <source>
        <dbReference type="PROSITE-ProRule" id="PRU00175"/>
    </source>
</evidence>
<evidence type="ECO:0000255" key="4">
    <source>
        <dbReference type="PROSITE-ProRule" id="PRU00228"/>
    </source>
</evidence>
<evidence type="ECO:0000255" key="5">
    <source>
        <dbReference type="PROSITE-ProRule" id="PRU00749"/>
    </source>
</evidence>
<evidence type="ECO:0000269" key="6">
    <source>
    </source>
</evidence>
<evidence type="ECO:0000269" key="7">
    <source>
    </source>
</evidence>
<evidence type="ECO:0000269" key="8">
    <source>
    </source>
</evidence>
<evidence type="ECO:0000269" key="9">
    <source>
    </source>
</evidence>
<evidence type="ECO:0000269" key="10">
    <source>
    </source>
</evidence>
<evidence type="ECO:0000269" key="11">
    <source>
    </source>
</evidence>
<evidence type="ECO:0000305" key="12"/>
<evidence type="ECO:0007744" key="13">
    <source>
    </source>
</evidence>
<evidence type="ECO:0007829" key="14">
    <source>
        <dbReference type="PDB" id="4TSE"/>
    </source>
</evidence>
<evidence type="ECO:0007829" key="15">
    <source>
        <dbReference type="PDB" id="4XI6"/>
    </source>
</evidence>
<evidence type="ECO:0007829" key="16">
    <source>
        <dbReference type="PDB" id="4XIB"/>
    </source>
</evidence>
<evidence type="ECO:0007829" key="17">
    <source>
        <dbReference type="PDB" id="8V0D"/>
    </source>
</evidence>
<evidence type="ECO:0007829" key="18">
    <source>
        <dbReference type="PDB" id="8V0E"/>
    </source>
</evidence>
<accession>Q86YT6</accession>
<accession>B0YJ38</accession>
<accession>Q2TB37</accession>
<accession>Q68D01</accession>
<accession>Q6YI51</accession>
<accession>Q8NBY0</accession>
<accession>Q8TCB5</accession>
<accession>Q8TCL7</accession>
<accession>Q9P2M3</accession>
<feature type="chain" id="PRO_0000055943" description="E3 ubiquitin-protein ligase MIB1">
    <location>
        <begin position="1"/>
        <end position="1006"/>
    </location>
</feature>
<feature type="domain" description="MIB/HERC2 1" evidence="5">
    <location>
        <begin position="6"/>
        <end position="74"/>
    </location>
</feature>
<feature type="domain" description="MIB/HERC2 2" evidence="5">
    <location>
        <begin position="143"/>
        <end position="221"/>
    </location>
</feature>
<feature type="repeat" description="ANK 1">
    <location>
        <begin position="430"/>
        <end position="460"/>
    </location>
</feature>
<feature type="repeat" description="ANK 2">
    <location>
        <begin position="463"/>
        <end position="492"/>
    </location>
</feature>
<feature type="repeat" description="ANK 3">
    <location>
        <begin position="496"/>
        <end position="525"/>
    </location>
</feature>
<feature type="repeat" description="ANK 4">
    <location>
        <begin position="529"/>
        <end position="558"/>
    </location>
</feature>
<feature type="repeat" description="ANK 5">
    <location>
        <begin position="562"/>
        <end position="591"/>
    </location>
</feature>
<feature type="repeat" description="ANK 6">
    <location>
        <begin position="595"/>
        <end position="627"/>
    </location>
</feature>
<feature type="repeat" description="ANK 7">
    <location>
        <begin position="631"/>
        <end position="661"/>
    </location>
</feature>
<feature type="repeat" description="ANK 8">
    <location>
        <begin position="665"/>
        <end position="694"/>
    </location>
</feature>
<feature type="repeat" description="ANK 9">
    <location>
        <begin position="698"/>
        <end position="729"/>
    </location>
</feature>
<feature type="zinc finger region" description="ZZ-type" evidence="4">
    <location>
        <begin position="80"/>
        <end position="132"/>
    </location>
</feature>
<feature type="zinc finger region" description="RING-type 1" evidence="3">
    <location>
        <begin position="819"/>
        <end position="854"/>
    </location>
</feature>
<feature type="zinc finger region" description="RING-type 2" evidence="3">
    <location>
        <begin position="866"/>
        <end position="901"/>
    </location>
</feature>
<feature type="zinc finger region" description="RING-type 3" evidence="3">
    <location>
        <begin position="963"/>
        <end position="996"/>
    </location>
</feature>
<feature type="coiled-coil region" evidence="2">
    <location>
        <begin position="935"/>
        <end position="962"/>
    </location>
</feature>
<feature type="binding site" evidence="4">
    <location>
        <position position="85"/>
    </location>
    <ligand>
        <name>Zn(2+)</name>
        <dbReference type="ChEBI" id="CHEBI:29105"/>
        <label>1</label>
    </ligand>
</feature>
<feature type="binding site" evidence="4">
    <location>
        <position position="88"/>
    </location>
    <ligand>
        <name>Zn(2+)</name>
        <dbReference type="ChEBI" id="CHEBI:29105"/>
        <label>1</label>
    </ligand>
</feature>
<feature type="binding site" evidence="4">
    <location>
        <position position="100"/>
    </location>
    <ligand>
        <name>Zn(2+)</name>
        <dbReference type="ChEBI" id="CHEBI:29105"/>
        <label>2</label>
    </ligand>
</feature>
<feature type="binding site" evidence="4">
    <location>
        <position position="103"/>
    </location>
    <ligand>
        <name>Zn(2+)</name>
        <dbReference type="ChEBI" id="CHEBI:29105"/>
        <label>2</label>
    </ligand>
</feature>
<feature type="binding site" evidence="4">
    <location>
        <position position="109"/>
    </location>
    <ligand>
        <name>Zn(2+)</name>
        <dbReference type="ChEBI" id="CHEBI:29105"/>
        <label>1</label>
    </ligand>
</feature>
<feature type="binding site" evidence="4">
    <location>
        <position position="112"/>
    </location>
    <ligand>
        <name>Zn(2+)</name>
        <dbReference type="ChEBI" id="CHEBI:29105"/>
        <label>1</label>
    </ligand>
</feature>
<feature type="binding site" evidence="4">
    <location>
        <position position="118"/>
    </location>
    <ligand>
        <name>Zn(2+)</name>
        <dbReference type="ChEBI" id="CHEBI:29105"/>
        <label>2</label>
    </ligand>
</feature>
<feature type="binding site" evidence="4">
    <location>
        <position position="122"/>
    </location>
    <ligand>
        <name>Zn(2+)</name>
        <dbReference type="ChEBI" id="CHEBI:29105"/>
        <label>2</label>
    </ligand>
</feature>
<feature type="modified residue" description="Phosphoserine" evidence="13">
    <location>
        <position position="408"/>
    </location>
</feature>
<feature type="sequence variant" id="VAR_069385" description="Found in a patient with severe intellectual disability, psychomotor delay, no speech, sleep disturbances, feeding problems, abnormal breething, deep-set eyes and short philtrum; dbSNP:rs755375969." evidence="8">
    <original>R</original>
    <variation>H</variation>
    <location>
        <position position="174"/>
    </location>
</feature>
<feature type="sequence variant" id="VAR_069620" description="In LVNC7; dbSNP:rs200035428." evidence="9">
    <original>V</original>
    <variation>F</variation>
    <location>
        <position position="943"/>
    </location>
</feature>
<feature type="sequence conflict" description="In Ref. 2; AAN18023." evidence="12" ref="2">
    <original>E</original>
    <variation>K</variation>
    <location>
        <position position="327"/>
    </location>
</feature>
<feature type="sequence conflict" description="In Ref. 2; AAN18023." evidence="12" ref="2">
    <original>S</original>
    <variation>F</variation>
    <location>
        <position position="398"/>
    </location>
</feature>
<feature type="strand" evidence="15">
    <location>
        <begin position="17"/>
        <end position="20"/>
    </location>
</feature>
<feature type="turn" evidence="15">
    <location>
        <begin position="27"/>
        <end position="30"/>
    </location>
</feature>
<feature type="strand" evidence="15">
    <location>
        <begin position="37"/>
        <end position="52"/>
    </location>
</feature>
<feature type="strand" evidence="15">
    <location>
        <begin position="57"/>
        <end position="66"/>
    </location>
</feature>
<feature type="strand" evidence="15">
    <location>
        <begin position="68"/>
        <end position="72"/>
    </location>
</feature>
<feature type="helix" evidence="15">
    <location>
        <begin position="74"/>
        <end position="76"/>
    </location>
</feature>
<feature type="turn" evidence="15">
    <location>
        <begin position="86"/>
        <end position="88"/>
    </location>
</feature>
<feature type="strand" evidence="15">
    <location>
        <begin position="91"/>
        <end position="105"/>
    </location>
</feature>
<feature type="helix" evidence="15">
    <location>
        <begin position="110"/>
        <end position="114"/>
    </location>
</feature>
<feature type="strand" evidence="15">
    <location>
        <begin position="124"/>
        <end position="127"/>
    </location>
</feature>
<feature type="helix" evidence="15">
    <location>
        <begin position="140"/>
        <end position="142"/>
    </location>
</feature>
<feature type="strand" evidence="15">
    <location>
        <begin position="145"/>
        <end position="152"/>
    </location>
</feature>
<feature type="strand" evidence="15">
    <location>
        <begin position="156"/>
        <end position="159"/>
    </location>
</feature>
<feature type="turn" evidence="15">
    <location>
        <begin position="166"/>
        <end position="169"/>
    </location>
</feature>
<feature type="strand" evidence="15">
    <location>
        <begin position="176"/>
        <end position="182"/>
    </location>
</feature>
<feature type="strand" evidence="15">
    <location>
        <begin position="192"/>
        <end position="197"/>
    </location>
</feature>
<feature type="strand" evidence="15">
    <location>
        <begin position="202"/>
        <end position="208"/>
    </location>
</feature>
<feature type="helix" evidence="15">
    <location>
        <begin position="209"/>
        <end position="211"/>
    </location>
</feature>
<feature type="strand" evidence="15">
    <location>
        <begin position="215"/>
        <end position="219"/>
    </location>
</feature>
<feature type="strand" evidence="15">
    <location>
        <begin position="221"/>
        <end position="227"/>
    </location>
</feature>
<feature type="helix" evidence="15">
    <location>
        <begin position="228"/>
        <end position="230"/>
    </location>
</feature>
<feature type="strand" evidence="14">
    <location>
        <begin position="251"/>
        <end position="253"/>
    </location>
</feature>
<feature type="helix" evidence="15">
    <location>
        <begin position="258"/>
        <end position="264"/>
    </location>
</feature>
<feature type="turn" evidence="15">
    <location>
        <begin position="265"/>
        <end position="269"/>
    </location>
</feature>
<feature type="helix" evidence="15">
    <location>
        <begin position="273"/>
        <end position="276"/>
    </location>
</feature>
<feature type="helix" evidence="15">
    <location>
        <begin position="277"/>
        <end position="280"/>
    </location>
</feature>
<feature type="strand" evidence="15">
    <location>
        <begin position="283"/>
        <end position="288"/>
    </location>
</feature>
<feature type="turn" evidence="16">
    <location>
        <begin position="290"/>
        <end position="292"/>
    </location>
</feature>
<feature type="strand" evidence="15">
    <location>
        <begin position="294"/>
        <end position="297"/>
    </location>
</feature>
<feature type="strand" evidence="15">
    <location>
        <begin position="303"/>
        <end position="306"/>
    </location>
</feature>
<feature type="helix" evidence="15">
    <location>
        <begin position="308"/>
        <end position="310"/>
    </location>
</feature>
<feature type="strand" evidence="15">
    <location>
        <begin position="338"/>
        <end position="341"/>
    </location>
</feature>
<feature type="helix" evidence="15">
    <location>
        <begin position="345"/>
        <end position="354"/>
    </location>
</feature>
<feature type="helix" evidence="15">
    <location>
        <begin position="360"/>
        <end position="365"/>
    </location>
</feature>
<feature type="strand" evidence="15">
    <location>
        <begin position="369"/>
        <end position="375"/>
    </location>
</feature>
<feature type="strand" evidence="15">
    <location>
        <begin position="381"/>
        <end position="385"/>
    </location>
</feature>
<feature type="strand" evidence="15">
    <location>
        <begin position="388"/>
        <end position="392"/>
    </location>
</feature>
<feature type="helix" evidence="15">
    <location>
        <begin position="394"/>
        <end position="396"/>
    </location>
</feature>
<feature type="strand" evidence="15">
    <location>
        <begin position="397"/>
        <end position="399"/>
    </location>
</feature>
<feature type="strand" evidence="14">
    <location>
        <begin position="402"/>
        <end position="405"/>
    </location>
</feature>
<feature type="helix" evidence="18">
    <location>
        <begin position="429"/>
        <end position="441"/>
    </location>
</feature>
<feature type="helix" evidence="18">
    <location>
        <begin position="444"/>
        <end position="451"/>
    </location>
</feature>
<feature type="helix" evidence="18">
    <location>
        <begin position="467"/>
        <end position="474"/>
    </location>
</feature>
<feature type="helix" evidence="18">
    <location>
        <begin position="477"/>
        <end position="485"/>
    </location>
</feature>
<feature type="helix" evidence="18">
    <location>
        <begin position="500"/>
        <end position="505"/>
    </location>
</feature>
<feature type="helix" evidence="18">
    <location>
        <begin position="510"/>
        <end position="518"/>
    </location>
</feature>
<feature type="helix" evidence="18">
    <location>
        <begin position="533"/>
        <end position="540"/>
    </location>
</feature>
<feature type="helix" evidence="18">
    <location>
        <begin position="543"/>
        <end position="551"/>
    </location>
</feature>
<feature type="helix" evidence="18">
    <location>
        <begin position="566"/>
        <end position="572"/>
    </location>
</feature>
<feature type="helix" evidence="18">
    <location>
        <begin position="576"/>
        <end position="584"/>
    </location>
</feature>
<feature type="helix" evidence="18">
    <location>
        <begin position="599"/>
        <end position="605"/>
    </location>
</feature>
<feature type="helix" evidence="18">
    <location>
        <begin position="609"/>
        <end position="617"/>
    </location>
</feature>
<feature type="helix" evidence="18">
    <location>
        <begin position="622"/>
        <end position="626"/>
    </location>
</feature>
<feature type="helix" evidence="18">
    <location>
        <begin position="635"/>
        <end position="641"/>
    </location>
</feature>
<feature type="helix" evidence="18">
    <location>
        <begin position="645"/>
        <end position="653"/>
    </location>
</feature>
<feature type="helix" evidence="18">
    <location>
        <begin position="669"/>
        <end position="675"/>
    </location>
</feature>
<feature type="helix" evidence="18">
    <location>
        <begin position="679"/>
        <end position="688"/>
    </location>
</feature>
<feature type="helix" evidence="18">
    <location>
        <begin position="702"/>
        <end position="721"/>
    </location>
</feature>
<feature type="helix" evidence="18">
    <location>
        <begin position="749"/>
        <end position="761"/>
    </location>
</feature>
<feature type="helix" evidence="18">
    <location>
        <begin position="777"/>
        <end position="779"/>
    </location>
</feature>
<feature type="helix" evidence="18">
    <location>
        <begin position="783"/>
        <end position="791"/>
    </location>
</feature>
<feature type="helix" evidence="17">
    <location>
        <begin position="945"/>
        <end position="961"/>
    </location>
</feature>
<feature type="turn" evidence="17">
    <location>
        <begin position="964"/>
        <end position="966"/>
    </location>
</feature>
<feature type="strand" evidence="17">
    <location>
        <begin position="967"/>
        <end position="970"/>
    </location>
</feature>
<feature type="strand" evidence="17">
    <location>
        <begin position="973"/>
        <end position="975"/>
    </location>
</feature>
<feature type="helix" evidence="17">
    <location>
        <begin position="983"/>
        <end position="986"/>
    </location>
</feature>
<feature type="turn" evidence="17">
    <location>
        <begin position="993"/>
        <end position="995"/>
    </location>
</feature>
<feature type="strand" evidence="17">
    <location>
        <begin position="1002"/>
        <end position="1004"/>
    </location>
</feature>
<sequence>MSNSRNNRVMVEGVGARVVRGPDWKWGKQDGGEGHVGTVRSFESPEEVVVVWDNGTAANYRCSGAYDLRILDSAPTGIKHDGTMCDTCRQQPIIGIRWKCAECTNYDLCTVCYHGDKHHLRHRFYRITTPGSERVLLESRRKSKKITARGIFAGARVVRGVDWQWEDQDGGNGRRGKVTEIQDWSASSPHSAAYVLWDNGAKNLYRVGFEGMSDLKCVQDAKGGSFYRDHCPVLGEQNGNRNPGGLQIGDLVNIDLDLEIVQSLQHGHGGWTDGMFETLTTTGTVCGIDEDHDIVVQYPSGNRWTFNPAVLTKANIVRSGDAAQGAEGGTSQFQVGDLVQVCYDLERIKLLQRGHGEWAEAMLPTLGKVGRVQQIYSDSDLKVEVCGTSWTYNPAAVSKVASAGSAISNASGERLSQLLKKLFETQESGDLNEELVKAAANGDVAKVEDLLKRPDVDVNGQCAGHTAMQAASQNGHVDILKLLLKQNVDVEAEDKDGDRAVHHAAFGDEGAVIEVLHRGSADLNARNKRRQTPLHIAVNKGHLQVVKTLLDFGCHPSLQDSEGDTPLHDAISKKRDDILAVLLEAGADVTITNNNGFNALHHAALRGNPSAMRVLLSKLPRPWIVDEKKDDGYTALHLAALNNHVEVAELLVHQGNANLDIQNVNQQTALHLAVERQHTQIVRLLVRAGAKLDIQDKDGDTPLHEALRHHTLSQLRQLQDMQDVGKVDAAWEPSKNTLIMGLGTQGAEKKSAASIACFLAANGADLSIRNKKGQSPLDLCPDPNLCKALAKCHKEKVSGQVGSRSPSMISNDSETLEECMVCSDMKRDTLFGPCGHIATCSLCSPRVKKCLICKEQVQSRTKIEECVVCSDKKAAVLFQPCGHMCACENCANLMKKCVQCRAVVERRVPFIMCCGGKSSEDATDDISSGNIPVLQKDKDNTNVNADVQKLQQQLQDIKEQTMCPVCLDRLKNMIFLCGHGTCQLCGDRMSECPICRKAIERRILLY</sequence>
<protein>
    <recommendedName>
        <fullName>E3 ubiquitin-protein ligase MIB1</fullName>
        <ecNumber>2.3.2.27</ecNumber>
    </recommendedName>
    <alternativeName>
        <fullName>DAPK-interacting protein 1</fullName>
        <shortName>DIP-1</shortName>
    </alternativeName>
    <alternativeName>
        <fullName>Mind bomb homolog 1</fullName>
    </alternativeName>
    <alternativeName>
        <fullName evidence="12">RING-type E3 ubiquitin transferase MIB1</fullName>
    </alternativeName>
    <alternativeName>
        <fullName>Zinc finger ZZ type with ankyrin repeat domain protein 2</fullName>
    </alternativeName>
</protein>
<comment type="function">
    <text evidence="1 10">E3 ubiquitin-protein ligase that mediates ubiquitination of Delta receptors, which act as ligands of Notch proteins. Positively regulates the Delta-mediated Notch signaling by ubiquitinating the intracellular domain of Delta, leading to endocytosis of Delta receptors. Probably mediates ubiquitination and subsequent proteasomal degradation of DAPK1, thereby antagonizing anti-apoptotic effects of DAPK1 to promote TNF-induced apoptosis (By similarity). Involved in ubiquitination of centriolar satellite CEP131, CEP290 and PCM1 proteins and hence inhibits primary cilium formation in proliferating cells. Mediates 'Lys-63'-linked polyubiquitination of TBK1, which probably participates in kinase activation.</text>
</comment>
<comment type="function">
    <text evidence="11">(Microbial infection) During adenovirus infection, mediates ubiquitination of Core-capsid bridging protein. This allows viral genome delivery into nucleus for infection.</text>
</comment>
<comment type="catalytic activity">
    <reaction>
        <text>S-ubiquitinyl-[E2 ubiquitin-conjugating enzyme]-L-cysteine + [acceptor protein]-L-lysine = [E2 ubiquitin-conjugating enzyme]-L-cysteine + N(6)-ubiquitinyl-[acceptor protein]-L-lysine.</text>
        <dbReference type="EC" id="2.3.2.27"/>
    </reaction>
</comment>
<comment type="pathway">
    <text>Protein modification; protein ubiquitination.</text>
</comment>
<comment type="subunit">
    <text evidence="10">Interacts with CEP131 and PCM1.</text>
</comment>
<comment type="interaction">
    <interactant intactId="EBI-2129148">
        <id>Q86YT6</id>
    </interactant>
    <interactant intactId="EBI-712001">
        <id>O95166</id>
        <label>GABARAP</label>
    </interactant>
    <organismsDiffer>false</organismsDiffer>
    <experiments>3</experiments>
</comment>
<comment type="interaction">
    <interactant intactId="EBI-2129148">
        <id>Q86YT6</id>
    </interactant>
    <interactant intactId="EBI-741421">
        <id>Q15154</id>
        <label>PCM1</label>
    </interactant>
    <organismsDiffer>false</organismsDiffer>
    <experiments>4</experiments>
</comment>
<comment type="interaction">
    <interactant intactId="EBI-2129148">
        <id>Q86YT6</id>
    </interactant>
    <interactant intactId="EBI-356402">
        <id>Q9UHD2</id>
        <label>TBK1</label>
    </interactant>
    <organismsDiffer>false</organismsDiffer>
    <experiments>2</experiments>
</comment>
<comment type="interaction">
    <interactant intactId="EBI-2129148">
        <id>Q86YT6</id>
    </interactant>
    <interactant intactId="EBI-6115874">
        <id>Q9QYP6</id>
        <label>Azi2</label>
    </interactant>
    <organismsDiffer>true</organismsDiffer>
    <experiments>2</experiments>
</comment>
<comment type="interaction">
    <interactant intactId="EBI-2129148">
        <id>Q86YT6</id>
    </interactant>
    <interactant intactId="EBI-25475877">
        <id>PRO_0000449627</id>
        <label>rep</label>
        <dbReference type="UniProtKB" id="P0DTD1"/>
    </interactant>
    <organismsDiffer>true</organismsDiffer>
    <experiments>4</experiments>
</comment>
<comment type="subcellular location">
    <subcellularLocation>
        <location evidence="10">Cytoplasm</location>
    </subcellularLocation>
    <subcellularLocation>
        <location evidence="10">Cytoplasm</location>
        <location evidence="10">Cytoskeleton</location>
        <location evidence="10">Microtubule organizing center</location>
        <location evidence="10">Centrosome</location>
        <location evidence="10">Centriolar satellite</location>
    </subcellularLocation>
    <subcellularLocation>
        <location evidence="1">Cell membrane</location>
    </subcellularLocation>
    <text evidence="1">Localizes to the plasma membrane (By similarity). According to PubMed:15048887, it is mitochondrial, however such localization remains unclear. Displaced from centriolar satellites in response to cellular stress, such as ultraviolet light (UV) radiation or heat shock.</text>
</comment>
<comment type="tissue specificity">
    <text evidence="6">Widely expressed at low level. Expressed at higher level in spinal cord, ovary, whole brain, and all specific brain regions examined.</text>
</comment>
<comment type="PTM">
    <text evidence="1 7 10">Ubiquitinated; possibly via autoubiquitination (By similarity). Ubiquitinated; this modification is inhibited in response to cellular stress, such as ultraviolet light (UV) radiation or heat shock.</text>
</comment>
<comment type="disease" evidence="9">
    <disease id="DI-03659">
        <name>Left ventricular non-compaction 7</name>
        <acronym>LVNC7</acronym>
        <description>A form of left ventricular non-compaction, a cardiomyopathy due to myocardial morphogenesis arrest and characterized by a hypertrophic left ventricle, a severely thickened 2-layered myocardium, numerous prominent trabeculations, deep intertrabecular recesses, and poor systolic function. Clinical manifestations are variable. Some affected individuals experience no symptoms at all, others develop heart failure. In some cases, left ventricular non-compaction is associated with other congenital heart anomalies. LVNC7 is an autosomal dominant condition.</description>
        <dbReference type="MIM" id="615092"/>
    </disease>
    <text>The disease is caused by variants affecting the gene represented in this entry.</text>
</comment>
<comment type="miscellaneous">
    <text>In epilepsy brain tissue, levels of expression are increased in the cytoplasm and microsomal fractions (endoplasmic reticulum).</text>
</comment>
<comment type="sequence caution" evidence="12">
    <conflict type="erroneous initiation">
        <sequence resource="EMBL-CDS" id="AAH22403"/>
    </conflict>
</comment>
<comment type="sequence caution" evidence="12">
    <conflict type="frameshift">
        <sequence resource="EMBL-CDS" id="AAN18023"/>
    </conflict>
</comment>
<comment type="sequence caution" evidence="12">
    <conflict type="erroneous initiation">
        <sequence resource="EMBL-CDS" id="BAC11439"/>
    </conflict>
</comment>
<gene>
    <name type="primary">MIB1</name>
    <name type="synonym">DIP1</name>
    <name type="synonym">KIAA1323</name>
    <name type="synonym">ZZANK2</name>
</gene>
<name>MIB1_HUMAN</name>
<organism>
    <name type="scientific">Homo sapiens</name>
    <name type="common">Human</name>
    <dbReference type="NCBI Taxonomy" id="9606"/>
    <lineage>
        <taxon>Eukaryota</taxon>
        <taxon>Metazoa</taxon>
        <taxon>Chordata</taxon>
        <taxon>Craniata</taxon>
        <taxon>Vertebrata</taxon>
        <taxon>Euteleostomi</taxon>
        <taxon>Mammalia</taxon>
        <taxon>Eutheria</taxon>
        <taxon>Euarchontoglires</taxon>
        <taxon>Primates</taxon>
        <taxon>Haplorrhini</taxon>
        <taxon>Catarrhini</taxon>
        <taxon>Hominidae</taxon>
        <taxon>Homo</taxon>
    </lineage>
</organism>